<accession>Q8R9U9</accession>
<name>COAD_CALS4</name>
<comment type="function">
    <text evidence="1">Reversibly transfers an adenylyl group from ATP to 4'-phosphopantetheine, yielding dephospho-CoA (dPCoA) and pyrophosphate.</text>
</comment>
<comment type="catalytic activity">
    <reaction evidence="1">
        <text>(R)-4'-phosphopantetheine + ATP + H(+) = 3'-dephospho-CoA + diphosphate</text>
        <dbReference type="Rhea" id="RHEA:19801"/>
        <dbReference type="ChEBI" id="CHEBI:15378"/>
        <dbReference type="ChEBI" id="CHEBI:30616"/>
        <dbReference type="ChEBI" id="CHEBI:33019"/>
        <dbReference type="ChEBI" id="CHEBI:57328"/>
        <dbReference type="ChEBI" id="CHEBI:61723"/>
        <dbReference type="EC" id="2.7.7.3"/>
    </reaction>
</comment>
<comment type="cofactor">
    <cofactor evidence="1">
        <name>Mg(2+)</name>
        <dbReference type="ChEBI" id="CHEBI:18420"/>
    </cofactor>
</comment>
<comment type="pathway">
    <text evidence="1">Cofactor biosynthesis; coenzyme A biosynthesis; CoA from (R)-pantothenate: step 4/5.</text>
</comment>
<comment type="subunit">
    <text evidence="1">Homohexamer.</text>
</comment>
<comment type="subcellular location">
    <subcellularLocation>
        <location evidence="1">Cytoplasm</location>
    </subcellularLocation>
</comment>
<comment type="similarity">
    <text evidence="1">Belongs to the bacterial CoaD family.</text>
</comment>
<dbReference type="EC" id="2.7.7.3" evidence="1"/>
<dbReference type="EMBL" id="AE008691">
    <property type="protein sequence ID" value="AAM24705.1"/>
    <property type="molecule type" value="Genomic_DNA"/>
</dbReference>
<dbReference type="RefSeq" id="WP_011025748.1">
    <property type="nucleotide sequence ID" value="NC_003869.1"/>
</dbReference>
<dbReference type="SMR" id="Q8R9U9"/>
<dbReference type="STRING" id="273068.TTE1486"/>
<dbReference type="KEGG" id="tte:TTE1486"/>
<dbReference type="eggNOG" id="COG0669">
    <property type="taxonomic scope" value="Bacteria"/>
</dbReference>
<dbReference type="HOGENOM" id="CLU_100149_0_1_9"/>
<dbReference type="OrthoDB" id="9806661at2"/>
<dbReference type="UniPathway" id="UPA00241">
    <property type="reaction ID" value="UER00355"/>
</dbReference>
<dbReference type="Proteomes" id="UP000000555">
    <property type="component" value="Chromosome"/>
</dbReference>
<dbReference type="GO" id="GO:0005737">
    <property type="term" value="C:cytoplasm"/>
    <property type="evidence" value="ECO:0007669"/>
    <property type="project" value="UniProtKB-SubCell"/>
</dbReference>
<dbReference type="GO" id="GO:0005524">
    <property type="term" value="F:ATP binding"/>
    <property type="evidence" value="ECO:0007669"/>
    <property type="project" value="UniProtKB-KW"/>
</dbReference>
<dbReference type="GO" id="GO:0004595">
    <property type="term" value="F:pantetheine-phosphate adenylyltransferase activity"/>
    <property type="evidence" value="ECO:0007669"/>
    <property type="project" value="UniProtKB-UniRule"/>
</dbReference>
<dbReference type="GO" id="GO:0015937">
    <property type="term" value="P:coenzyme A biosynthetic process"/>
    <property type="evidence" value="ECO:0007669"/>
    <property type="project" value="UniProtKB-UniRule"/>
</dbReference>
<dbReference type="CDD" id="cd02163">
    <property type="entry name" value="PPAT"/>
    <property type="match status" value="1"/>
</dbReference>
<dbReference type="Gene3D" id="3.40.50.620">
    <property type="entry name" value="HUPs"/>
    <property type="match status" value="1"/>
</dbReference>
<dbReference type="HAMAP" id="MF_00151">
    <property type="entry name" value="PPAT_bact"/>
    <property type="match status" value="1"/>
</dbReference>
<dbReference type="InterPro" id="IPR004821">
    <property type="entry name" value="Cyt_trans-like"/>
</dbReference>
<dbReference type="InterPro" id="IPR001980">
    <property type="entry name" value="PPAT"/>
</dbReference>
<dbReference type="InterPro" id="IPR014729">
    <property type="entry name" value="Rossmann-like_a/b/a_fold"/>
</dbReference>
<dbReference type="NCBIfam" id="TIGR01510">
    <property type="entry name" value="coaD_prev_kdtB"/>
    <property type="match status" value="1"/>
</dbReference>
<dbReference type="NCBIfam" id="TIGR00125">
    <property type="entry name" value="cyt_tran_rel"/>
    <property type="match status" value="1"/>
</dbReference>
<dbReference type="PANTHER" id="PTHR21342">
    <property type="entry name" value="PHOSPHOPANTETHEINE ADENYLYLTRANSFERASE"/>
    <property type="match status" value="1"/>
</dbReference>
<dbReference type="PANTHER" id="PTHR21342:SF1">
    <property type="entry name" value="PHOSPHOPANTETHEINE ADENYLYLTRANSFERASE"/>
    <property type="match status" value="1"/>
</dbReference>
<dbReference type="Pfam" id="PF01467">
    <property type="entry name" value="CTP_transf_like"/>
    <property type="match status" value="1"/>
</dbReference>
<dbReference type="PRINTS" id="PR01020">
    <property type="entry name" value="LPSBIOSNTHSS"/>
</dbReference>
<dbReference type="SUPFAM" id="SSF52374">
    <property type="entry name" value="Nucleotidylyl transferase"/>
    <property type="match status" value="1"/>
</dbReference>
<proteinExistence type="inferred from homology"/>
<keyword id="KW-0067">ATP-binding</keyword>
<keyword id="KW-0173">Coenzyme A biosynthesis</keyword>
<keyword id="KW-0963">Cytoplasm</keyword>
<keyword id="KW-0460">Magnesium</keyword>
<keyword id="KW-0547">Nucleotide-binding</keyword>
<keyword id="KW-0548">Nucleotidyltransferase</keyword>
<keyword id="KW-1185">Reference proteome</keyword>
<keyword id="KW-0808">Transferase</keyword>
<reference key="1">
    <citation type="journal article" date="2002" name="Genome Res.">
        <title>A complete sequence of the T. tengcongensis genome.</title>
        <authorList>
            <person name="Bao Q."/>
            <person name="Tian Y."/>
            <person name="Li W."/>
            <person name="Xu Z."/>
            <person name="Xuan Z."/>
            <person name="Hu S."/>
            <person name="Dong W."/>
            <person name="Yang J."/>
            <person name="Chen Y."/>
            <person name="Xue Y."/>
            <person name="Xu Y."/>
            <person name="Lai X."/>
            <person name="Huang L."/>
            <person name="Dong X."/>
            <person name="Ma Y."/>
            <person name="Ling L."/>
            <person name="Tan H."/>
            <person name="Chen R."/>
            <person name="Wang J."/>
            <person name="Yu J."/>
            <person name="Yang H."/>
        </authorList>
    </citation>
    <scope>NUCLEOTIDE SEQUENCE [LARGE SCALE GENOMIC DNA]</scope>
    <source>
        <strain>DSM 15242 / JCM 11007 / NBRC 100824 / MB4</strain>
    </source>
</reference>
<feature type="chain" id="PRO_0000156298" description="Phosphopantetheine adenylyltransferase">
    <location>
        <begin position="1"/>
        <end position="160"/>
    </location>
</feature>
<feature type="binding site" evidence="1">
    <location>
        <begin position="9"/>
        <end position="10"/>
    </location>
    <ligand>
        <name>ATP</name>
        <dbReference type="ChEBI" id="CHEBI:30616"/>
    </ligand>
</feature>
<feature type="binding site" evidence="1">
    <location>
        <position position="9"/>
    </location>
    <ligand>
        <name>substrate</name>
    </ligand>
</feature>
<feature type="binding site" evidence="1">
    <location>
        <position position="17"/>
    </location>
    <ligand>
        <name>ATP</name>
        <dbReference type="ChEBI" id="CHEBI:30616"/>
    </ligand>
</feature>
<feature type="binding site" evidence="1">
    <location>
        <position position="41"/>
    </location>
    <ligand>
        <name>substrate</name>
    </ligand>
</feature>
<feature type="binding site" evidence="1">
    <location>
        <position position="73"/>
    </location>
    <ligand>
        <name>substrate</name>
    </ligand>
</feature>
<feature type="binding site" evidence="1">
    <location>
        <position position="87"/>
    </location>
    <ligand>
        <name>substrate</name>
    </ligand>
</feature>
<feature type="binding site" evidence="1">
    <location>
        <begin position="88"/>
        <end position="90"/>
    </location>
    <ligand>
        <name>ATP</name>
        <dbReference type="ChEBI" id="CHEBI:30616"/>
    </ligand>
</feature>
<feature type="binding site" evidence="1">
    <location>
        <position position="98"/>
    </location>
    <ligand>
        <name>ATP</name>
        <dbReference type="ChEBI" id="CHEBI:30616"/>
    </ligand>
</feature>
<feature type="binding site" evidence="1">
    <location>
        <begin position="123"/>
        <end position="129"/>
    </location>
    <ligand>
        <name>ATP</name>
        <dbReference type="ChEBI" id="CHEBI:30616"/>
    </ligand>
</feature>
<feature type="site" description="Transition state stabilizer" evidence="1">
    <location>
        <position position="17"/>
    </location>
</feature>
<sequence>MRVAIYPGSFDPVTYGHIDIIKRGANLFDKLIVAVLLNPAKRPLFSIQERIELLKEVTKDIPNVEVDYFDGLLVEYAKKVNASAIIKGLRMVSDFEYEFQMALVNKKLNPSVETIFLMTSPKYGYLSSSLVKEIAQFGGCLSEFVPDIVAERLMEKFKKS</sequence>
<protein>
    <recommendedName>
        <fullName evidence="1">Phosphopantetheine adenylyltransferase</fullName>
        <ecNumber evidence="1">2.7.7.3</ecNumber>
    </recommendedName>
    <alternativeName>
        <fullName evidence="1">Dephospho-CoA pyrophosphorylase</fullName>
    </alternativeName>
    <alternativeName>
        <fullName evidence="1">Pantetheine-phosphate adenylyltransferase</fullName>
        <shortName evidence="1">PPAT</shortName>
    </alternativeName>
</protein>
<evidence type="ECO:0000255" key="1">
    <source>
        <dbReference type="HAMAP-Rule" id="MF_00151"/>
    </source>
</evidence>
<organism>
    <name type="scientific">Caldanaerobacter subterraneus subsp. tengcongensis (strain DSM 15242 / JCM 11007 / NBRC 100824 / MB4)</name>
    <name type="common">Thermoanaerobacter tengcongensis</name>
    <dbReference type="NCBI Taxonomy" id="273068"/>
    <lineage>
        <taxon>Bacteria</taxon>
        <taxon>Bacillati</taxon>
        <taxon>Bacillota</taxon>
        <taxon>Clostridia</taxon>
        <taxon>Thermoanaerobacterales</taxon>
        <taxon>Thermoanaerobacteraceae</taxon>
        <taxon>Caldanaerobacter</taxon>
    </lineage>
</organism>
<gene>
    <name evidence="1" type="primary">coaD</name>
    <name type="ordered locus">TTE1486</name>
</gene>